<feature type="chain" id="PRO_0000362921" description="ATP synthase subunit c, chloroplastic">
    <location>
        <begin position="1"/>
        <end position="81"/>
    </location>
</feature>
<feature type="transmembrane region" description="Helical" evidence="1">
    <location>
        <begin position="3"/>
        <end position="23"/>
    </location>
</feature>
<feature type="transmembrane region" description="Helical" evidence="1">
    <location>
        <begin position="57"/>
        <end position="77"/>
    </location>
</feature>
<feature type="site" description="Reversibly protonated during proton transport" evidence="1">
    <location>
        <position position="61"/>
    </location>
</feature>
<dbReference type="EMBL" id="DQ383815">
    <property type="protein sequence ID" value="ABD47138.1"/>
    <property type="molecule type" value="Genomic_DNA"/>
</dbReference>
<dbReference type="RefSeq" id="YP_588109.1">
    <property type="nucleotide sequence ID" value="NC_007977.1"/>
</dbReference>
<dbReference type="SMR" id="Q1KXW7"/>
<dbReference type="EnsemblPlants" id="mRNA:HanXRQr2_Chr13g0603561">
    <property type="protein sequence ID" value="CDS:HanXRQr2_Chr13g0603561.1"/>
    <property type="gene ID" value="HanXRQr2_Chr13g0603561"/>
</dbReference>
<dbReference type="GeneID" id="4055577"/>
<dbReference type="Gramene" id="mRNA:HanXRQr2_Chr13g0603561">
    <property type="protein sequence ID" value="CDS:HanXRQr2_Chr13g0603561.1"/>
    <property type="gene ID" value="HanXRQr2_Chr13g0603561"/>
</dbReference>
<dbReference type="KEGG" id="han:4055577"/>
<dbReference type="OrthoDB" id="438052at2759"/>
<dbReference type="GO" id="GO:0009535">
    <property type="term" value="C:chloroplast thylakoid membrane"/>
    <property type="evidence" value="ECO:0007669"/>
    <property type="project" value="UniProtKB-SubCell"/>
</dbReference>
<dbReference type="GO" id="GO:0045259">
    <property type="term" value="C:proton-transporting ATP synthase complex"/>
    <property type="evidence" value="ECO:0007669"/>
    <property type="project" value="UniProtKB-KW"/>
</dbReference>
<dbReference type="GO" id="GO:0033177">
    <property type="term" value="C:proton-transporting two-sector ATPase complex, proton-transporting domain"/>
    <property type="evidence" value="ECO:0007669"/>
    <property type="project" value="InterPro"/>
</dbReference>
<dbReference type="GO" id="GO:0008289">
    <property type="term" value="F:lipid binding"/>
    <property type="evidence" value="ECO:0007669"/>
    <property type="project" value="UniProtKB-KW"/>
</dbReference>
<dbReference type="GO" id="GO:0046933">
    <property type="term" value="F:proton-transporting ATP synthase activity, rotational mechanism"/>
    <property type="evidence" value="ECO:0007669"/>
    <property type="project" value="UniProtKB-UniRule"/>
</dbReference>
<dbReference type="CDD" id="cd18183">
    <property type="entry name" value="ATP-synt_Fo_c_ATPH"/>
    <property type="match status" value="1"/>
</dbReference>
<dbReference type="FunFam" id="1.20.20.10:FF:000001">
    <property type="entry name" value="ATP synthase subunit c, chloroplastic"/>
    <property type="match status" value="1"/>
</dbReference>
<dbReference type="Gene3D" id="1.20.20.10">
    <property type="entry name" value="F1F0 ATP synthase subunit C"/>
    <property type="match status" value="1"/>
</dbReference>
<dbReference type="HAMAP" id="MF_01396">
    <property type="entry name" value="ATP_synth_c_bact"/>
    <property type="match status" value="1"/>
</dbReference>
<dbReference type="InterPro" id="IPR005953">
    <property type="entry name" value="ATP_synth_csu_bac/chlpt"/>
</dbReference>
<dbReference type="InterPro" id="IPR000454">
    <property type="entry name" value="ATP_synth_F0_csu"/>
</dbReference>
<dbReference type="InterPro" id="IPR020537">
    <property type="entry name" value="ATP_synth_F0_csu_DDCD_BS"/>
</dbReference>
<dbReference type="InterPro" id="IPR038662">
    <property type="entry name" value="ATP_synth_F0_csu_sf"/>
</dbReference>
<dbReference type="InterPro" id="IPR002379">
    <property type="entry name" value="ATPase_proteolipid_c-like_dom"/>
</dbReference>
<dbReference type="InterPro" id="IPR035921">
    <property type="entry name" value="F/V-ATP_Csub_sf"/>
</dbReference>
<dbReference type="NCBIfam" id="TIGR01260">
    <property type="entry name" value="ATP_synt_c"/>
    <property type="match status" value="1"/>
</dbReference>
<dbReference type="NCBIfam" id="NF005608">
    <property type="entry name" value="PRK07354.1"/>
    <property type="match status" value="1"/>
</dbReference>
<dbReference type="PANTHER" id="PTHR10031">
    <property type="entry name" value="ATP SYNTHASE LIPID-BINDING PROTEIN, MITOCHONDRIAL"/>
    <property type="match status" value="1"/>
</dbReference>
<dbReference type="PANTHER" id="PTHR10031:SF0">
    <property type="entry name" value="ATPASE PROTEIN 9"/>
    <property type="match status" value="1"/>
</dbReference>
<dbReference type="Pfam" id="PF00137">
    <property type="entry name" value="ATP-synt_C"/>
    <property type="match status" value="1"/>
</dbReference>
<dbReference type="PRINTS" id="PR00124">
    <property type="entry name" value="ATPASEC"/>
</dbReference>
<dbReference type="SUPFAM" id="SSF81333">
    <property type="entry name" value="F1F0 ATP synthase subunit C"/>
    <property type="match status" value="1"/>
</dbReference>
<dbReference type="PROSITE" id="PS00605">
    <property type="entry name" value="ATPASE_C"/>
    <property type="match status" value="1"/>
</dbReference>
<comment type="function">
    <text evidence="1">F(1)F(0) ATP synthase produces ATP from ADP in the presence of a proton or sodium gradient. F-type ATPases consist of two structural domains, F(1) containing the extramembraneous catalytic core and F(0) containing the membrane proton channel, linked together by a central stalk and a peripheral stalk. During catalysis, ATP synthesis in the catalytic domain of F(1) is coupled via a rotary mechanism of the central stalk subunits to proton translocation.</text>
</comment>
<comment type="function">
    <text evidence="1">Key component of the F(0) channel; it plays a direct role in translocation across the membrane. A homomeric c-ring of between 10-14 subunits forms the central stalk rotor element with the F(1) delta and epsilon subunits.</text>
</comment>
<comment type="subunit">
    <text evidence="1">F-type ATPases have 2 components, F(1) - the catalytic core - and F(0) - the membrane proton channel. F(1) has five subunits: alpha(3), beta(3), gamma(1), delta(1), epsilon(1). F(0) has four main subunits: a(1), b(1), b'(1) and c(10-14). The alpha and beta chains form an alternating ring which encloses part of the gamma chain. F(1) is attached to F(0) by a central stalk formed by the gamma and epsilon chains, while a peripheral stalk is formed by the delta, b and b' chains.</text>
</comment>
<comment type="subcellular location">
    <subcellularLocation>
        <location evidence="1">Plastid</location>
        <location evidence="1">Chloroplast thylakoid membrane</location>
        <topology evidence="1">Multi-pass membrane protein</topology>
    </subcellularLocation>
</comment>
<comment type="miscellaneous">
    <text>In plastids the F-type ATPase is also known as CF(1)CF(0).</text>
</comment>
<comment type="similarity">
    <text evidence="1">Belongs to the ATPase C chain family.</text>
</comment>
<accession>Q1KXW7</accession>
<sequence length="81" mass="7990">MNPLISAASVIAAGLAVGLASIGPGVGQGTAAGQAVEGIARQPEAEGKIRGTLLLSLAFMEALTIYGLVVALALLFANPFV</sequence>
<evidence type="ECO:0000255" key="1">
    <source>
        <dbReference type="HAMAP-Rule" id="MF_01396"/>
    </source>
</evidence>
<keyword id="KW-0066">ATP synthesis</keyword>
<keyword id="KW-0138">CF(0)</keyword>
<keyword id="KW-0150">Chloroplast</keyword>
<keyword id="KW-0375">Hydrogen ion transport</keyword>
<keyword id="KW-0406">Ion transport</keyword>
<keyword id="KW-0446">Lipid-binding</keyword>
<keyword id="KW-0472">Membrane</keyword>
<keyword id="KW-0934">Plastid</keyword>
<keyword id="KW-0793">Thylakoid</keyword>
<keyword id="KW-0812">Transmembrane</keyword>
<keyword id="KW-1133">Transmembrane helix</keyword>
<keyword id="KW-0813">Transport</keyword>
<name>ATPH_HELAN</name>
<protein>
    <recommendedName>
        <fullName evidence="1">ATP synthase subunit c, chloroplastic</fullName>
    </recommendedName>
    <alternativeName>
        <fullName evidence="1">ATP synthase F(0) sector subunit c</fullName>
    </alternativeName>
    <alternativeName>
        <fullName evidence="1">ATPase subunit III</fullName>
    </alternativeName>
    <alternativeName>
        <fullName evidence="1">F-type ATPase subunit c</fullName>
        <shortName evidence="1">F-ATPase subunit c</shortName>
    </alternativeName>
    <alternativeName>
        <fullName evidence="1">Lipid-binding protein</fullName>
    </alternativeName>
</protein>
<reference key="1">
    <citation type="submission" date="2006-01" db="EMBL/GenBank/DDBJ databases">
        <title>A comparison of the first two published chloroplast genomes in Asteraceae: Lactuca and Helianthus.</title>
        <authorList>
            <person name="Timme R.E."/>
            <person name="Kuehl J.V."/>
            <person name="Boore J.L."/>
            <person name="Jansen R.K."/>
        </authorList>
    </citation>
    <scope>NUCLEOTIDE SEQUENCE [LARGE SCALE GENOMIC DNA]</scope>
    <source>
        <strain>cv. HA383</strain>
    </source>
</reference>
<geneLocation type="chloroplast"/>
<proteinExistence type="inferred from homology"/>
<gene>
    <name evidence="1" type="primary">atpH</name>
</gene>
<organism>
    <name type="scientific">Helianthus annuus</name>
    <name type="common">Common sunflower</name>
    <dbReference type="NCBI Taxonomy" id="4232"/>
    <lineage>
        <taxon>Eukaryota</taxon>
        <taxon>Viridiplantae</taxon>
        <taxon>Streptophyta</taxon>
        <taxon>Embryophyta</taxon>
        <taxon>Tracheophyta</taxon>
        <taxon>Spermatophyta</taxon>
        <taxon>Magnoliopsida</taxon>
        <taxon>eudicotyledons</taxon>
        <taxon>Gunneridae</taxon>
        <taxon>Pentapetalae</taxon>
        <taxon>asterids</taxon>
        <taxon>campanulids</taxon>
        <taxon>Asterales</taxon>
        <taxon>Asteraceae</taxon>
        <taxon>Asteroideae</taxon>
        <taxon>Heliantheae alliance</taxon>
        <taxon>Heliantheae</taxon>
        <taxon>Helianthus</taxon>
    </lineage>
</organism>